<dbReference type="EC" id="2.5.1.7" evidence="1"/>
<dbReference type="EMBL" id="AE016795">
    <property type="protein sequence ID" value="AAO09191.1"/>
    <property type="molecule type" value="Genomic_DNA"/>
</dbReference>
<dbReference type="RefSeq" id="WP_011078757.1">
    <property type="nucleotide sequence ID" value="NC_004459.3"/>
</dbReference>
<dbReference type="SMR" id="Q8DEB6"/>
<dbReference type="GeneID" id="93894987"/>
<dbReference type="KEGG" id="vvu:VV1_0679"/>
<dbReference type="HOGENOM" id="CLU_027387_0_0_6"/>
<dbReference type="UniPathway" id="UPA00219"/>
<dbReference type="Proteomes" id="UP000002275">
    <property type="component" value="Chromosome 1"/>
</dbReference>
<dbReference type="GO" id="GO:0005737">
    <property type="term" value="C:cytoplasm"/>
    <property type="evidence" value="ECO:0007669"/>
    <property type="project" value="UniProtKB-SubCell"/>
</dbReference>
<dbReference type="GO" id="GO:0008760">
    <property type="term" value="F:UDP-N-acetylglucosamine 1-carboxyvinyltransferase activity"/>
    <property type="evidence" value="ECO:0007669"/>
    <property type="project" value="UniProtKB-UniRule"/>
</dbReference>
<dbReference type="GO" id="GO:0051301">
    <property type="term" value="P:cell division"/>
    <property type="evidence" value="ECO:0007669"/>
    <property type="project" value="UniProtKB-KW"/>
</dbReference>
<dbReference type="GO" id="GO:0071555">
    <property type="term" value="P:cell wall organization"/>
    <property type="evidence" value="ECO:0007669"/>
    <property type="project" value="UniProtKB-KW"/>
</dbReference>
<dbReference type="GO" id="GO:0009252">
    <property type="term" value="P:peptidoglycan biosynthetic process"/>
    <property type="evidence" value="ECO:0007669"/>
    <property type="project" value="UniProtKB-UniRule"/>
</dbReference>
<dbReference type="GO" id="GO:0008360">
    <property type="term" value="P:regulation of cell shape"/>
    <property type="evidence" value="ECO:0007669"/>
    <property type="project" value="UniProtKB-KW"/>
</dbReference>
<dbReference type="GO" id="GO:0019277">
    <property type="term" value="P:UDP-N-acetylgalactosamine biosynthetic process"/>
    <property type="evidence" value="ECO:0007669"/>
    <property type="project" value="InterPro"/>
</dbReference>
<dbReference type="CDD" id="cd01555">
    <property type="entry name" value="UdpNAET"/>
    <property type="match status" value="1"/>
</dbReference>
<dbReference type="FunFam" id="3.65.10.10:FF:000001">
    <property type="entry name" value="UDP-N-acetylglucosamine 1-carboxyvinyltransferase"/>
    <property type="match status" value="1"/>
</dbReference>
<dbReference type="Gene3D" id="3.65.10.10">
    <property type="entry name" value="Enolpyruvate transferase domain"/>
    <property type="match status" value="2"/>
</dbReference>
<dbReference type="HAMAP" id="MF_00111">
    <property type="entry name" value="MurA"/>
    <property type="match status" value="1"/>
</dbReference>
<dbReference type="InterPro" id="IPR001986">
    <property type="entry name" value="Enolpyruvate_Tfrase_dom"/>
</dbReference>
<dbReference type="InterPro" id="IPR036968">
    <property type="entry name" value="Enolpyruvate_Tfrase_sf"/>
</dbReference>
<dbReference type="InterPro" id="IPR050068">
    <property type="entry name" value="MurA_subfamily"/>
</dbReference>
<dbReference type="InterPro" id="IPR013792">
    <property type="entry name" value="RNA3'P_cycl/enolpyr_Trfase_a/b"/>
</dbReference>
<dbReference type="InterPro" id="IPR005750">
    <property type="entry name" value="UDP_GlcNAc_COvinyl_MurA"/>
</dbReference>
<dbReference type="NCBIfam" id="TIGR01072">
    <property type="entry name" value="murA"/>
    <property type="match status" value="1"/>
</dbReference>
<dbReference type="NCBIfam" id="NF006873">
    <property type="entry name" value="PRK09369.1"/>
    <property type="match status" value="1"/>
</dbReference>
<dbReference type="PANTHER" id="PTHR43783">
    <property type="entry name" value="UDP-N-ACETYLGLUCOSAMINE 1-CARBOXYVINYLTRANSFERASE"/>
    <property type="match status" value="1"/>
</dbReference>
<dbReference type="PANTHER" id="PTHR43783:SF1">
    <property type="entry name" value="UDP-N-ACETYLGLUCOSAMINE 1-CARBOXYVINYLTRANSFERASE"/>
    <property type="match status" value="1"/>
</dbReference>
<dbReference type="Pfam" id="PF00275">
    <property type="entry name" value="EPSP_synthase"/>
    <property type="match status" value="1"/>
</dbReference>
<dbReference type="SUPFAM" id="SSF55205">
    <property type="entry name" value="EPT/RTPC-like"/>
    <property type="match status" value="1"/>
</dbReference>
<evidence type="ECO:0000255" key="1">
    <source>
        <dbReference type="HAMAP-Rule" id="MF_00111"/>
    </source>
</evidence>
<feature type="chain" id="PRO_0000178950" description="UDP-N-acetylglucosamine 1-carboxyvinyltransferase">
    <location>
        <begin position="1"/>
        <end position="421"/>
    </location>
</feature>
<feature type="active site" description="Proton donor" evidence="1">
    <location>
        <position position="116"/>
    </location>
</feature>
<feature type="binding site" evidence="1">
    <location>
        <begin position="23"/>
        <end position="24"/>
    </location>
    <ligand>
        <name>phosphoenolpyruvate</name>
        <dbReference type="ChEBI" id="CHEBI:58702"/>
    </ligand>
</feature>
<feature type="binding site" evidence="1">
    <location>
        <position position="92"/>
    </location>
    <ligand>
        <name>UDP-N-acetyl-alpha-D-glucosamine</name>
        <dbReference type="ChEBI" id="CHEBI:57705"/>
    </ligand>
</feature>
<feature type="binding site" evidence="1">
    <location>
        <begin position="121"/>
        <end position="125"/>
    </location>
    <ligand>
        <name>UDP-N-acetyl-alpha-D-glucosamine</name>
        <dbReference type="ChEBI" id="CHEBI:57705"/>
    </ligand>
</feature>
<feature type="binding site" evidence="1">
    <location>
        <begin position="161"/>
        <end position="164"/>
    </location>
    <ligand>
        <name>UDP-N-acetyl-alpha-D-glucosamine</name>
        <dbReference type="ChEBI" id="CHEBI:57705"/>
    </ligand>
</feature>
<feature type="binding site" evidence="1">
    <location>
        <position position="306"/>
    </location>
    <ligand>
        <name>UDP-N-acetyl-alpha-D-glucosamine</name>
        <dbReference type="ChEBI" id="CHEBI:57705"/>
    </ligand>
</feature>
<feature type="binding site" evidence="1">
    <location>
        <position position="328"/>
    </location>
    <ligand>
        <name>UDP-N-acetyl-alpha-D-glucosamine</name>
        <dbReference type="ChEBI" id="CHEBI:57705"/>
    </ligand>
</feature>
<feature type="modified residue" description="2-(S-cysteinyl)pyruvic acid O-phosphothioketal" evidence="1">
    <location>
        <position position="116"/>
    </location>
</feature>
<comment type="function">
    <text evidence="1">Cell wall formation. Adds enolpyruvyl to UDP-N-acetylglucosamine.</text>
</comment>
<comment type="catalytic activity">
    <reaction evidence="1">
        <text>phosphoenolpyruvate + UDP-N-acetyl-alpha-D-glucosamine = UDP-N-acetyl-3-O-(1-carboxyvinyl)-alpha-D-glucosamine + phosphate</text>
        <dbReference type="Rhea" id="RHEA:18681"/>
        <dbReference type="ChEBI" id="CHEBI:43474"/>
        <dbReference type="ChEBI" id="CHEBI:57705"/>
        <dbReference type="ChEBI" id="CHEBI:58702"/>
        <dbReference type="ChEBI" id="CHEBI:68483"/>
        <dbReference type="EC" id="2.5.1.7"/>
    </reaction>
</comment>
<comment type="pathway">
    <text evidence="1">Cell wall biogenesis; peptidoglycan biosynthesis.</text>
</comment>
<comment type="subcellular location">
    <subcellularLocation>
        <location evidence="1">Cytoplasm</location>
    </subcellularLocation>
</comment>
<comment type="similarity">
    <text evidence="1">Belongs to the EPSP synthase family. MurA subfamily.</text>
</comment>
<reference key="1">
    <citation type="submission" date="2002-12" db="EMBL/GenBank/DDBJ databases">
        <title>Complete genome sequence of Vibrio vulnificus CMCP6.</title>
        <authorList>
            <person name="Rhee J.H."/>
            <person name="Kim S.Y."/>
            <person name="Chung S.S."/>
            <person name="Kim J.J."/>
            <person name="Moon Y.H."/>
            <person name="Jeong H."/>
            <person name="Choy H.E."/>
        </authorList>
    </citation>
    <scope>NUCLEOTIDE SEQUENCE [LARGE SCALE GENOMIC DNA]</scope>
    <source>
        <strain>CMCP6</strain>
    </source>
</reference>
<accession>Q8DEB6</accession>
<name>MURA_VIBVU</name>
<proteinExistence type="inferred from homology"/>
<gene>
    <name evidence="1" type="primary">murA</name>
    <name type="ordered locus">VV1_0679</name>
</gene>
<keyword id="KW-0131">Cell cycle</keyword>
<keyword id="KW-0132">Cell division</keyword>
<keyword id="KW-0133">Cell shape</keyword>
<keyword id="KW-0961">Cell wall biogenesis/degradation</keyword>
<keyword id="KW-0963">Cytoplasm</keyword>
<keyword id="KW-0573">Peptidoglycan synthesis</keyword>
<keyword id="KW-0670">Pyruvate</keyword>
<keyword id="KW-0808">Transferase</keyword>
<sequence length="421" mass="44707">MEKFRVIGSTQPLVGEVTISGAKNAALPILFASILAEEPVEVANVPHLRDIDTTMELLKRLGAKVERNGSVHVDPSSIDEYCAPYDLVKTMRASIWALGPLVARFGQGQVSLPGGCAIGARPVDLHITGLEQLGATITLEDGYVKAHVDGRLQGAHIVMDKVSVGATITIMCAATLAEGTTVLDNAAREPEIVDTAKFLNTLGAKISGAGTDTITIEGVERLGGGKHAVVADRIETGTFLVAAAVSGGKVVCHNTQAHLLEAVLAKLEEAGALVETGEDWISVDMTGRELKAVNIRTAPHPGFPTDMQAQFTLLNMMAKGGGVITETIFENRFMHVPELKRMGAKAEIEGNTVICGDVERLSAAQVMATDLRASASLVIAGCIAKGETIVDRIYHIDRGYDKIENKLNALGAKIERFRESN</sequence>
<protein>
    <recommendedName>
        <fullName evidence="1">UDP-N-acetylglucosamine 1-carboxyvinyltransferase</fullName>
        <ecNumber evidence="1">2.5.1.7</ecNumber>
    </recommendedName>
    <alternativeName>
        <fullName evidence="1">Enoylpyruvate transferase</fullName>
    </alternativeName>
    <alternativeName>
        <fullName evidence="1">UDP-N-acetylglucosamine enolpyruvyl transferase</fullName>
        <shortName evidence="1">EPT</shortName>
    </alternativeName>
</protein>
<organism>
    <name type="scientific">Vibrio vulnificus (strain CMCP6)</name>
    <dbReference type="NCBI Taxonomy" id="216895"/>
    <lineage>
        <taxon>Bacteria</taxon>
        <taxon>Pseudomonadati</taxon>
        <taxon>Pseudomonadota</taxon>
        <taxon>Gammaproteobacteria</taxon>
        <taxon>Vibrionales</taxon>
        <taxon>Vibrionaceae</taxon>
        <taxon>Vibrio</taxon>
    </lineage>
</organism>